<evidence type="ECO:0000255" key="1">
    <source>
        <dbReference type="HAMAP-Rule" id="MF_01870"/>
    </source>
</evidence>
<name>ARND_ECO57</name>
<proteinExistence type="inferred from homology"/>
<accession>Q8XDZ2</accession>
<accession>Q7AC22</accession>
<keyword id="KW-0046">Antibiotic resistance</keyword>
<keyword id="KW-0378">Hydrolase</keyword>
<keyword id="KW-0441">Lipid A biosynthesis</keyword>
<keyword id="KW-0444">Lipid biosynthesis</keyword>
<keyword id="KW-0443">Lipid metabolism</keyword>
<keyword id="KW-0448">Lipopolysaccharide biosynthesis</keyword>
<keyword id="KW-1185">Reference proteome</keyword>
<reference key="1">
    <citation type="journal article" date="2001" name="Nature">
        <title>Genome sequence of enterohaemorrhagic Escherichia coli O157:H7.</title>
        <authorList>
            <person name="Perna N.T."/>
            <person name="Plunkett G. III"/>
            <person name="Burland V."/>
            <person name="Mau B."/>
            <person name="Glasner J.D."/>
            <person name="Rose D.J."/>
            <person name="Mayhew G.F."/>
            <person name="Evans P.S."/>
            <person name="Gregor J."/>
            <person name="Kirkpatrick H.A."/>
            <person name="Posfai G."/>
            <person name="Hackett J."/>
            <person name="Klink S."/>
            <person name="Boutin A."/>
            <person name="Shao Y."/>
            <person name="Miller L."/>
            <person name="Grotbeck E.J."/>
            <person name="Davis N.W."/>
            <person name="Lim A."/>
            <person name="Dimalanta E.T."/>
            <person name="Potamousis K."/>
            <person name="Apodaca J."/>
            <person name="Anantharaman T.S."/>
            <person name="Lin J."/>
            <person name="Yen G."/>
            <person name="Schwartz D.C."/>
            <person name="Welch R.A."/>
            <person name="Blattner F.R."/>
        </authorList>
    </citation>
    <scope>NUCLEOTIDE SEQUENCE [LARGE SCALE GENOMIC DNA]</scope>
    <source>
        <strain>O157:H7 / EDL933 / ATCC 700927 / EHEC</strain>
    </source>
</reference>
<reference key="2">
    <citation type="journal article" date="2001" name="DNA Res.">
        <title>Complete genome sequence of enterohemorrhagic Escherichia coli O157:H7 and genomic comparison with a laboratory strain K-12.</title>
        <authorList>
            <person name="Hayashi T."/>
            <person name="Makino K."/>
            <person name="Ohnishi M."/>
            <person name="Kurokawa K."/>
            <person name="Ishii K."/>
            <person name="Yokoyama K."/>
            <person name="Han C.-G."/>
            <person name="Ohtsubo E."/>
            <person name="Nakayama K."/>
            <person name="Murata T."/>
            <person name="Tanaka M."/>
            <person name="Tobe T."/>
            <person name="Iida T."/>
            <person name="Takami H."/>
            <person name="Honda T."/>
            <person name="Sasakawa C."/>
            <person name="Ogasawara N."/>
            <person name="Yasunaga T."/>
            <person name="Kuhara S."/>
            <person name="Shiba T."/>
            <person name="Hattori M."/>
            <person name="Shinagawa H."/>
        </authorList>
    </citation>
    <scope>NUCLEOTIDE SEQUENCE [LARGE SCALE GENOMIC DNA]</scope>
    <source>
        <strain>O157:H7 / Sakai / RIMD 0509952 / EHEC</strain>
    </source>
</reference>
<feature type="chain" id="PRO_0000383503" description="Probable 4-deoxy-4-formamido-L-arabinose-phosphoundecaprenol deformylase ArnD">
    <location>
        <begin position="1"/>
        <end position="296"/>
    </location>
</feature>
<feature type="domain" description="NodB homology" evidence="1">
    <location>
        <begin position="2"/>
        <end position="260"/>
    </location>
</feature>
<sequence length="296" mass="33138">MTKVGLRIDVDTFRGTREGVPRLLEILSKHNIQASIFFSVGPDNMGRHLWRLVKPQFLWKMLRSNAASLYGWDILLAGTAWPGKEIGHANADIIREAAKYHEVGLHAWDHHAWQARSGNWDRQTMIDDIARGLRTLEEIIGQPVTCSAAAGWRADQQVIEAKEAFHLRYNSDCRGAMPFRPLLESGNPGTAQIPVTLPTWDEVIGRDVKAEDFNGWLLNRILRDKGTPVYTIHAEVEGCAYQHNFVDLLKRAAQEGVTFCPLSELLSETLPLGQVVRGNIAGREGWLGCQQIAGSR</sequence>
<protein>
    <recommendedName>
        <fullName evidence="1">Probable 4-deoxy-4-formamido-L-arabinose-phosphoundecaprenol deformylase ArnD</fullName>
        <ecNumber evidence="1">3.5.1.n3</ecNumber>
    </recommendedName>
</protein>
<comment type="function">
    <text evidence="1">Catalyzes the deformylation of 4-deoxy-4-formamido-L-arabinose-phosphoundecaprenol to 4-amino-4-deoxy-L-arabinose-phosphoundecaprenol. The modified arabinose is attached to lipid A and is required for resistance to polymyxin and cationic antimicrobial peptides.</text>
</comment>
<comment type="catalytic activity">
    <reaction evidence="1">
        <text>4-deoxy-4-formamido-alpha-L-arabinopyranosyl di-trans,octa-cis-undecaprenyl phosphate + H2O = 4-amino-4-deoxy-alpha-L-arabinopyranosyl di-trans,octa-cis-undecaprenyl phosphate + formate</text>
        <dbReference type="Rhea" id="RHEA:27734"/>
        <dbReference type="ChEBI" id="CHEBI:15377"/>
        <dbReference type="ChEBI" id="CHEBI:15740"/>
        <dbReference type="ChEBI" id="CHEBI:58909"/>
        <dbReference type="ChEBI" id="CHEBI:60463"/>
        <dbReference type="EC" id="3.5.1.n3"/>
    </reaction>
</comment>
<comment type="pathway">
    <text evidence="1">Glycolipid biosynthesis; 4-amino-4-deoxy-alpha-L-arabinose undecaprenyl phosphate biosynthesis; 4-amino-4-deoxy-alpha-L-arabinose undecaprenyl phosphate from UDP-4-deoxy-4-formamido-beta-L-arabinose and undecaprenyl phosphate: step 2/2.</text>
</comment>
<comment type="pathway">
    <text evidence="1">Bacterial outer membrane biogenesis; lipopolysaccharide biosynthesis.</text>
</comment>
<comment type="similarity">
    <text evidence="1">Belongs to the polysaccharide deacetylase family. ArnD deformylase subfamily.</text>
</comment>
<gene>
    <name evidence="1" type="primary">arnD</name>
    <name type="ordered locus">Z3514</name>
    <name type="ordered locus">ECs3144</name>
</gene>
<dbReference type="EC" id="3.5.1.n3" evidence="1"/>
<dbReference type="EMBL" id="AE005174">
    <property type="protein sequence ID" value="AAG57387.1"/>
    <property type="molecule type" value="Genomic_DNA"/>
</dbReference>
<dbReference type="EMBL" id="BA000007">
    <property type="protein sequence ID" value="BAB36567.1"/>
    <property type="molecule type" value="Genomic_DNA"/>
</dbReference>
<dbReference type="PIR" id="G85865">
    <property type="entry name" value="G85865"/>
</dbReference>
<dbReference type="PIR" id="H91021">
    <property type="entry name" value="H91021"/>
</dbReference>
<dbReference type="RefSeq" id="NP_311171.1">
    <property type="nucleotide sequence ID" value="NC_002695.1"/>
</dbReference>
<dbReference type="RefSeq" id="WP_000169742.1">
    <property type="nucleotide sequence ID" value="NZ_VOAI01000001.1"/>
</dbReference>
<dbReference type="SMR" id="Q8XDZ2"/>
<dbReference type="STRING" id="155864.Z3514"/>
<dbReference type="GeneID" id="916852"/>
<dbReference type="KEGG" id="ece:Z3514"/>
<dbReference type="KEGG" id="ecs:ECs_3144"/>
<dbReference type="PATRIC" id="fig|386585.9.peg.3280"/>
<dbReference type="eggNOG" id="COG0726">
    <property type="taxonomic scope" value="Bacteria"/>
</dbReference>
<dbReference type="HOGENOM" id="CLU_084199_0_0_6"/>
<dbReference type="OMA" id="HHGWQAN"/>
<dbReference type="UniPathway" id="UPA00030"/>
<dbReference type="UniPathway" id="UPA00036">
    <property type="reaction ID" value="UER00496"/>
</dbReference>
<dbReference type="Proteomes" id="UP000000558">
    <property type="component" value="Chromosome"/>
</dbReference>
<dbReference type="Proteomes" id="UP000002519">
    <property type="component" value="Chromosome"/>
</dbReference>
<dbReference type="GO" id="GO:0016020">
    <property type="term" value="C:membrane"/>
    <property type="evidence" value="ECO:0007669"/>
    <property type="project" value="GOC"/>
</dbReference>
<dbReference type="GO" id="GO:0016811">
    <property type="term" value="F:hydrolase activity, acting on carbon-nitrogen (but not peptide) bonds, in linear amides"/>
    <property type="evidence" value="ECO:0007669"/>
    <property type="project" value="UniProtKB-UniRule"/>
</dbReference>
<dbReference type="GO" id="GO:0036108">
    <property type="term" value="P:4-amino-4-deoxy-alpha-L-arabinopyranosyl undecaprenyl phosphate biosynthetic process"/>
    <property type="evidence" value="ECO:0007669"/>
    <property type="project" value="UniProtKB-UniRule"/>
</dbReference>
<dbReference type="GO" id="GO:0009245">
    <property type="term" value="P:lipid A biosynthetic process"/>
    <property type="evidence" value="ECO:0007669"/>
    <property type="project" value="UniProtKB-UniRule"/>
</dbReference>
<dbReference type="GO" id="GO:0009103">
    <property type="term" value="P:lipopolysaccharide biosynthetic process"/>
    <property type="evidence" value="ECO:0007669"/>
    <property type="project" value="UniProtKB-UniRule"/>
</dbReference>
<dbReference type="GO" id="GO:0046677">
    <property type="term" value="P:response to antibiotic"/>
    <property type="evidence" value="ECO:0007669"/>
    <property type="project" value="UniProtKB-KW"/>
</dbReference>
<dbReference type="CDD" id="cd10939">
    <property type="entry name" value="CE4_ArnD"/>
    <property type="match status" value="1"/>
</dbReference>
<dbReference type="Gene3D" id="3.20.20.370">
    <property type="entry name" value="Glycoside hydrolase/deacetylase"/>
    <property type="match status" value="1"/>
</dbReference>
<dbReference type="HAMAP" id="MF_01870">
    <property type="entry name" value="ArnD"/>
    <property type="match status" value="1"/>
</dbReference>
<dbReference type="InterPro" id="IPR023557">
    <property type="entry name" value="ArnD"/>
</dbReference>
<dbReference type="InterPro" id="IPR011330">
    <property type="entry name" value="Glyco_hydro/deAcase_b/a-brl"/>
</dbReference>
<dbReference type="InterPro" id="IPR002509">
    <property type="entry name" value="NODB_dom"/>
</dbReference>
<dbReference type="InterPro" id="IPR050248">
    <property type="entry name" value="Polysacc_deacetylase_ArnD"/>
</dbReference>
<dbReference type="NCBIfam" id="NF011923">
    <property type="entry name" value="PRK15394.1"/>
    <property type="match status" value="1"/>
</dbReference>
<dbReference type="PANTHER" id="PTHR10587:SF137">
    <property type="entry name" value="4-DEOXY-4-FORMAMIDO-L-ARABINOSE-PHOSPHOUNDECAPRENOL DEFORMYLASE ARND-RELATED"/>
    <property type="match status" value="1"/>
</dbReference>
<dbReference type="PANTHER" id="PTHR10587">
    <property type="entry name" value="GLYCOSYL TRANSFERASE-RELATED"/>
    <property type="match status" value="1"/>
</dbReference>
<dbReference type="Pfam" id="PF01522">
    <property type="entry name" value="Polysacc_deac_1"/>
    <property type="match status" value="1"/>
</dbReference>
<dbReference type="SUPFAM" id="SSF88713">
    <property type="entry name" value="Glycoside hydrolase/deacetylase"/>
    <property type="match status" value="1"/>
</dbReference>
<dbReference type="PROSITE" id="PS51677">
    <property type="entry name" value="NODB"/>
    <property type="match status" value="1"/>
</dbReference>
<organism>
    <name type="scientific">Escherichia coli O157:H7</name>
    <dbReference type="NCBI Taxonomy" id="83334"/>
    <lineage>
        <taxon>Bacteria</taxon>
        <taxon>Pseudomonadati</taxon>
        <taxon>Pseudomonadota</taxon>
        <taxon>Gammaproteobacteria</taxon>
        <taxon>Enterobacterales</taxon>
        <taxon>Enterobacteriaceae</taxon>
        <taxon>Escherichia</taxon>
    </lineage>
</organism>